<dbReference type="EC" id="1.14.14.3" evidence="1"/>
<dbReference type="EMBL" id="M10961">
    <property type="protein sequence ID" value="AAA88686.1"/>
    <property type="molecule type" value="Genomic_DNA"/>
</dbReference>
<dbReference type="PIR" id="A23866">
    <property type="entry name" value="A23866"/>
</dbReference>
<dbReference type="RefSeq" id="WP_010991820.1">
    <property type="nucleotide sequence ID" value="NZ_CP009468.1"/>
</dbReference>
<dbReference type="PDB" id="1BRL">
    <property type="method" value="X-ray"/>
    <property type="resolution" value="2.40 A"/>
    <property type="chains" value="B/D=1-324"/>
</dbReference>
<dbReference type="PDB" id="1BSL">
    <property type="method" value="X-ray"/>
    <property type="resolution" value="1.95 A"/>
    <property type="chains" value="A/B=1-324"/>
</dbReference>
<dbReference type="PDB" id="1LUC">
    <property type="method" value="X-ray"/>
    <property type="resolution" value="1.50 A"/>
    <property type="chains" value="B=1-324"/>
</dbReference>
<dbReference type="PDB" id="1XKJ">
    <property type="method" value="X-ray"/>
    <property type="resolution" value="2.50 A"/>
    <property type="chains" value="A/B=1-324"/>
</dbReference>
<dbReference type="PDB" id="3FGC">
    <property type="method" value="X-ray"/>
    <property type="resolution" value="2.30 A"/>
    <property type="chains" value="B/D=1-324"/>
</dbReference>
<dbReference type="PDBsum" id="1BRL"/>
<dbReference type="PDBsum" id="1BSL"/>
<dbReference type="PDBsum" id="1LUC"/>
<dbReference type="PDBsum" id="1XKJ"/>
<dbReference type="PDBsum" id="3FGC"/>
<dbReference type="SMR" id="P07739"/>
<dbReference type="MINT" id="P07739"/>
<dbReference type="BRENDA" id="1.14.14.3">
    <property type="organism ID" value="4778"/>
</dbReference>
<dbReference type="EvolutionaryTrace" id="P07739"/>
<dbReference type="GO" id="GO:0005829">
    <property type="term" value="C:cytosol"/>
    <property type="evidence" value="ECO:0007669"/>
    <property type="project" value="TreeGrafter"/>
</dbReference>
<dbReference type="GO" id="GO:0047646">
    <property type="term" value="F:alkanal monooxygenase (FMN-linked) activity"/>
    <property type="evidence" value="ECO:0007669"/>
    <property type="project" value="UniProtKB-EC"/>
</dbReference>
<dbReference type="GO" id="GO:0008218">
    <property type="term" value="P:bioluminescence"/>
    <property type="evidence" value="ECO:0007669"/>
    <property type="project" value="UniProtKB-KW"/>
</dbReference>
<dbReference type="CDD" id="cd01096">
    <property type="entry name" value="Alkanal_monooxygenase"/>
    <property type="match status" value="1"/>
</dbReference>
<dbReference type="Gene3D" id="3.20.20.30">
    <property type="entry name" value="Luciferase-like domain"/>
    <property type="match status" value="2"/>
</dbReference>
<dbReference type="InterPro" id="IPR033924">
    <property type="entry name" value="Alkanal_monooxygenase"/>
</dbReference>
<dbReference type="InterPro" id="IPR050766">
    <property type="entry name" value="Bact_Lucif_Oxidored"/>
</dbReference>
<dbReference type="InterPro" id="IPR018235">
    <property type="entry name" value="Bacterial_luciferase_CS"/>
</dbReference>
<dbReference type="InterPro" id="IPR011251">
    <property type="entry name" value="Luciferase-like_dom"/>
</dbReference>
<dbReference type="InterPro" id="IPR036661">
    <property type="entry name" value="Luciferase-like_sf"/>
</dbReference>
<dbReference type="InterPro" id="IPR002103">
    <property type="entry name" value="Luciferase_bac/NFP"/>
</dbReference>
<dbReference type="PANTHER" id="PTHR30137:SF8">
    <property type="entry name" value="BLR5498 PROTEIN"/>
    <property type="match status" value="1"/>
</dbReference>
<dbReference type="PANTHER" id="PTHR30137">
    <property type="entry name" value="LUCIFERASE-LIKE MONOOXYGENASE"/>
    <property type="match status" value="1"/>
</dbReference>
<dbReference type="Pfam" id="PF00296">
    <property type="entry name" value="Bac_luciferase"/>
    <property type="match status" value="1"/>
</dbReference>
<dbReference type="PRINTS" id="PR00089">
    <property type="entry name" value="LUCIFERASE"/>
</dbReference>
<dbReference type="SUPFAM" id="SSF51679">
    <property type="entry name" value="Bacterial luciferase-like"/>
    <property type="match status" value="1"/>
</dbReference>
<dbReference type="PROSITE" id="PS00494">
    <property type="entry name" value="BACTERIAL_LUCIFERASE"/>
    <property type="match status" value="1"/>
</dbReference>
<gene>
    <name type="primary">luxB</name>
</gene>
<reference key="1">
    <citation type="journal article" date="1986" name="J. Biol. Chem.">
        <title>Nucleotide sequence of the luxB gene of Vibrio harveyi and the complete amino acid sequence of the beta subunit of bacterial luciferase.</title>
        <authorList>
            <person name="Johnston T.C."/>
            <person name="Thompson R.B."/>
            <person name="Baldwin T.O."/>
        </authorList>
    </citation>
    <scope>NUCLEOTIDE SEQUENCE [GENOMIC DNA]</scope>
    <scope>PARTIAL PROTEIN SEQUENCE</scope>
    <source>
        <strain>ATCC 33843 / NCIMB 1871 / 392 / MAV</strain>
    </source>
</reference>
<reference key="2">
    <citation type="journal article" date="1985" name="J. Biol. Chem.">
        <title>Nucleotide sequence of the luxA gene of Vibrio harveyi and the complete amino acid sequence of the alpha subunit of bacterial luciferase.</title>
        <authorList>
            <person name="Cohn D.H."/>
            <person name="Mileham A.J."/>
            <person name="Simon M.I."/>
            <person name="Nealson K.H."/>
            <person name="Rausch S.K."/>
            <person name="Bonam D."/>
            <person name="Baldwin T.O."/>
        </authorList>
    </citation>
    <scope>NUCLEOTIDE SEQUENCE [GENOMIC DNA] OF 1-12</scope>
</reference>
<reference key="3">
    <citation type="journal article" date="1995" name="Biochemistry">
        <title>Three-dimensional structure of bacterial luciferase from Vibrio harveyi at 2.4-A resolution.</title>
        <authorList>
            <person name="Fisher A.J."/>
            <person name="Raushel F.M."/>
            <person name="Baldwin T.O."/>
            <person name="Rayment I."/>
        </authorList>
    </citation>
    <scope>X-RAY CRYSTALLOGRAPHY (2.4 ANGSTROMS)</scope>
    <scope>SUBUNIT</scope>
</reference>
<reference key="4">
    <citation type="journal article" date="1996" name="J. Biol. Chem.">
        <title>The 1.5-A resolution crystal structure of bacterial luciferase in low salt conditions.</title>
        <authorList>
            <person name="Fisher A.J."/>
            <person name="Thompson T.B."/>
            <person name="Thoden J.B."/>
            <person name="Baldwin T.O."/>
            <person name="Rayment I."/>
        </authorList>
    </citation>
    <scope>X-RAY CRYSTALLOGRAPHY (1.5 ANGSTROMS)</scope>
    <scope>SUBUNIT</scope>
</reference>
<reference key="5">
    <citation type="journal article" date="1997" name="Biochemistry">
        <title>Structure of bacterial luciferase beta 2 homodimer: implications for flavin binding.</title>
        <authorList>
            <person name="Tanner J.J."/>
            <person name="Miller M.D."/>
            <person name="Wilson K.S."/>
            <person name="Tu S.C."/>
            <person name="Krause K.L."/>
        </authorList>
    </citation>
    <scope>X-RAY CRYSTALLOGRAPHY (2.5 ANGSTROMS)</scope>
</reference>
<reference key="6">
    <citation type="journal article" date="1997" name="Protein Sci.">
        <title>Structure of the beta 2 homodimer of bacterial luciferase from Vibrio harveyi: X-ray analysis of a kinetic protein folding trap.</title>
        <authorList>
            <person name="Thoden J.B."/>
            <person name="Holden H.M."/>
            <person name="Fisher A.J."/>
            <person name="Sinclair J.F."/>
            <person name="Wesenberg G."/>
            <person name="Baldwin T.O."/>
            <person name="Rayment I."/>
        </authorList>
    </citation>
    <scope>X-RAY CRYSTALLOGRAPHY (1.95 ANGSTROMS)</scope>
</reference>
<protein>
    <recommendedName>
        <fullName>Alkanal monooxygenase beta chain</fullName>
        <ecNumber evidence="1">1.14.14.3</ecNumber>
    </recommendedName>
    <alternativeName>
        <fullName>Bacterial luciferase beta chain</fullName>
    </alternativeName>
</protein>
<proteinExistence type="evidence at protein level"/>
<name>LUXB_VIBHA</name>
<evidence type="ECO:0000250" key="1">
    <source>
        <dbReference type="UniProtKB" id="P19840"/>
    </source>
</evidence>
<evidence type="ECO:0000269" key="2">
    <source>
    </source>
</evidence>
<evidence type="ECO:0000269" key="3">
    <source>
    </source>
</evidence>
<evidence type="ECO:0000305" key="4"/>
<evidence type="ECO:0007829" key="5">
    <source>
        <dbReference type="PDB" id="1BRL"/>
    </source>
</evidence>
<evidence type="ECO:0007829" key="6">
    <source>
        <dbReference type="PDB" id="1BSL"/>
    </source>
</evidence>
<evidence type="ECO:0007829" key="7">
    <source>
        <dbReference type="PDB" id="1LUC"/>
    </source>
</evidence>
<evidence type="ECO:0007829" key="8">
    <source>
        <dbReference type="PDB" id="1XKJ"/>
    </source>
</evidence>
<evidence type="ECO:0007829" key="9">
    <source>
        <dbReference type="PDB" id="3FGC"/>
    </source>
</evidence>
<feature type="chain" id="PRO_0000220181" description="Alkanal monooxygenase beta chain">
    <location>
        <begin position="1"/>
        <end position="324"/>
    </location>
</feature>
<feature type="strand" evidence="7">
    <location>
        <begin position="2"/>
        <end position="7"/>
    </location>
</feature>
<feature type="strand" evidence="7">
    <location>
        <begin position="13"/>
        <end position="15"/>
    </location>
</feature>
<feature type="helix" evidence="7">
    <location>
        <begin position="17"/>
        <end position="32"/>
    </location>
</feature>
<feature type="turn" evidence="5">
    <location>
        <begin position="33"/>
        <end position="35"/>
    </location>
</feature>
<feature type="strand" evidence="7">
    <location>
        <begin position="38"/>
        <end position="41"/>
    </location>
</feature>
<feature type="strand" evidence="7">
    <location>
        <begin position="46"/>
        <end position="49"/>
    </location>
</feature>
<feature type="helix" evidence="7">
    <location>
        <begin position="55"/>
        <end position="65"/>
    </location>
</feature>
<feature type="strand" evidence="7">
    <location>
        <begin position="67"/>
        <end position="77"/>
    </location>
</feature>
<feature type="helix" evidence="8">
    <location>
        <begin position="78"/>
        <end position="80"/>
    </location>
</feature>
<feature type="helix" evidence="7">
    <location>
        <begin position="83"/>
        <end position="96"/>
    </location>
</feature>
<feature type="strand" evidence="7">
    <location>
        <begin position="101"/>
        <end position="106"/>
    </location>
</feature>
<feature type="helix" evidence="7">
    <location>
        <begin position="111"/>
        <end position="116"/>
    </location>
</feature>
<feature type="helix" evidence="7">
    <location>
        <begin position="121"/>
        <end position="123"/>
    </location>
</feature>
<feature type="helix" evidence="7">
    <location>
        <begin position="124"/>
        <end position="141"/>
    </location>
</feature>
<feature type="strand" evidence="7">
    <location>
        <begin position="142"/>
        <end position="144"/>
    </location>
</feature>
<feature type="strand" evidence="7">
    <location>
        <begin position="147"/>
        <end position="150"/>
    </location>
</feature>
<feature type="strand" evidence="6">
    <location>
        <begin position="155"/>
        <end position="157"/>
    </location>
</feature>
<feature type="strand" evidence="7">
    <location>
        <begin position="170"/>
        <end position="173"/>
    </location>
</feature>
<feature type="helix" evidence="7">
    <location>
        <begin position="177"/>
        <end position="186"/>
    </location>
</feature>
<feature type="strand" evidence="7">
    <location>
        <begin position="190"/>
        <end position="192"/>
    </location>
</feature>
<feature type="helix" evidence="7">
    <location>
        <begin position="198"/>
        <end position="214"/>
    </location>
</feature>
<feature type="helix" evidence="6">
    <location>
        <begin position="219"/>
        <end position="221"/>
    </location>
</feature>
<feature type="strand" evidence="7">
    <location>
        <begin position="225"/>
        <end position="232"/>
    </location>
</feature>
<feature type="helix" evidence="7">
    <location>
        <begin position="236"/>
        <end position="254"/>
    </location>
</feature>
<feature type="turn" evidence="6">
    <location>
        <begin position="255"/>
        <end position="257"/>
    </location>
</feature>
<feature type="helix" evidence="7">
    <location>
        <begin position="260"/>
        <end position="270"/>
    </location>
</feature>
<feature type="strand" evidence="7">
    <location>
        <begin position="271"/>
        <end position="275"/>
    </location>
</feature>
<feature type="helix" evidence="7">
    <location>
        <begin position="276"/>
        <end position="290"/>
    </location>
</feature>
<feature type="strand" evidence="7">
    <location>
        <begin position="293"/>
        <end position="298"/>
    </location>
</feature>
<feature type="helix" evidence="7">
    <location>
        <begin position="305"/>
        <end position="317"/>
    </location>
</feature>
<feature type="helix" evidence="9">
    <location>
        <begin position="319"/>
        <end position="324"/>
    </location>
</feature>
<accession>P07739</accession>
<organism>
    <name type="scientific">Vibrio harveyi</name>
    <name type="common">Beneckea harveyi</name>
    <dbReference type="NCBI Taxonomy" id="669"/>
    <lineage>
        <taxon>Bacteria</taxon>
        <taxon>Pseudomonadati</taxon>
        <taxon>Pseudomonadota</taxon>
        <taxon>Gammaproteobacteria</taxon>
        <taxon>Vibrionales</taxon>
        <taxon>Vibrionaceae</taxon>
        <taxon>Vibrio</taxon>
    </lineage>
</organism>
<comment type="function">
    <text evidence="1">Light-emitting reaction in luminous bacteria. The specific role of the beta subunit is unknown, but it is absolutely required for bioluminescence activity.</text>
</comment>
<comment type="catalytic activity">
    <reaction evidence="1">
        <text>a long-chain fatty aldehyde + FMNH2 + O2 = a long-chain fatty acid + hnu + FMN + H2O + 2 H(+)</text>
        <dbReference type="Rhea" id="RHEA:17181"/>
        <dbReference type="ChEBI" id="CHEBI:15377"/>
        <dbReference type="ChEBI" id="CHEBI:15378"/>
        <dbReference type="ChEBI" id="CHEBI:15379"/>
        <dbReference type="ChEBI" id="CHEBI:17176"/>
        <dbReference type="ChEBI" id="CHEBI:30212"/>
        <dbReference type="ChEBI" id="CHEBI:57560"/>
        <dbReference type="ChEBI" id="CHEBI:57618"/>
        <dbReference type="ChEBI" id="CHEBI:58210"/>
        <dbReference type="EC" id="1.14.14.3"/>
    </reaction>
</comment>
<comment type="subunit">
    <text evidence="2 3">Heterodimer of an alpha and a beta chain.</text>
</comment>
<comment type="similarity">
    <text evidence="4">Belongs to the bacterial luciferase oxidoreductase family.</text>
</comment>
<sequence length="324" mass="36345">MKFGLFFLNFMNSKRSSDQVIEEMLDTAHYVDQLKFDTLAVYENHFSNNGVVGAPLTVAGFLLGMTKNAKVASLNHVITTHHPVRVAEEACLLDQMSEGRFAFGFSDCEKSADMRFFNRPTDSQFQLFSECHKIINDAFTTGYCHPNNDFYSFPKISVNPHAFTEGGPAQFVNATSKEVVEWAAKLGLPLVFRWDDSNAQRKEYAGLYHEVAQAHGVDVSQVRHKLTLLVNQNVDGEAARAEARVYLEEFVRESYSNTDFEQKMGELLSENAIGTYEESTQAARVAIECCGAADLLMSFESMEDKAQQRAVIDVVNANIVKYHS</sequence>
<keyword id="KW-0002">3D-structure</keyword>
<keyword id="KW-0903">Direct protein sequencing</keyword>
<keyword id="KW-0285">Flavoprotein</keyword>
<keyword id="KW-0288">FMN</keyword>
<keyword id="KW-0455">Luminescence</keyword>
<keyword id="KW-0503">Monooxygenase</keyword>
<keyword id="KW-0560">Oxidoreductase</keyword>
<keyword id="KW-0599">Photoprotein</keyword>